<accession>Q31XQ6</accession>
<dbReference type="EMBL" id="CP000036">
    <property type="protein sequence ID" value="ABB67152.1"/>
    <property type="molecule type" value="Genomic_DNA"/>
</dbReference>
<dbReference type="RefSeq" id="WP_005135933.1">
    <property type="nucleotide sequence ID" value="NC_007613.1"/>
</dbReference>
<dbReference type="KEGG" id="sbo:SBO_2610"/>
<dbReference type="HOGENOM" id="CLU_079569_1_2_6"/>
<dbReference type="Proteomes" id="UP000007067">
    <property type="component" value="Chromosome"/>
</dbReference>
<dbReference type="GO" id="GO:0005886">
    <property type="term" value="C:plasma membrane"/>
    <property type="evidence" value="ECO:0007669"/>
    <property type="project" value="UniProtKB-SubCell"/>
</dbReference>
<dbReference type="GO" id="GO:0015171">
    <property type="term" value="F:amino acid transmembrane transporter activity"/>
    <property type="evidence" value="ECO:0007669"/>
    <property type="project" value="TreeGrafter"/>
</dbReference>
<dbReference type="GO" id="GO:0033228">
    <property type="term" value="P:cysteine export across plasma membrane"/>
    <property type="evidence" value="ECO:0007669"/>
    <property type="project" value="TreeGrafter"/>
</dbReference>
<dbReference type="InterPro" id="IPR001123">
    <property type="entry name" value="LeuE-type"/>
</dbReference>
<dbReference type="NCBIfam" id="NF007653">
    <property type="entry name" value="PRK10323.1"/>
    <property type="match status" value="1"/>
</dbReference>
<dbReference type="PANTHER" id="PTHR30086">
    <property type="entry name" value="ARGININE EXPORTER PROTEIN ARGO"/>
    <property type="match status" value="1"/>
</dbReference>
<dbReference type="PANTHER" id="PTHR30086:SF20">
    <property type="entry name" value="ARGININE EXPORTER PROTEIN ARGO-RELATED"/>
    <property type="match status" value="1"/>
</dbReference>
<dbReference type="Pfam" id="PF01810">
    <property type="entry name" value="LysE"/>
    <property type="match status" value="1"/>
</dbReference>
<proteinExistence type="inferred from homology"/>
<gene>
    <name type="primary">eamB</name>
    <name type="ordered locus">SBO_2610</name>
</gene>
<evidence type="ECO:0000250" key="1">
    <source>
        <dbReference type="UniProtKB" id="P38101"/>
    </source>
</evidence>
<evidence type="ECO:0000255" key="2"/>
<evidence type="ECO:0000305" key="3"/>
<comment type="function">
    <text evidence="1">Exporter of O-acetylserine (OAS) and cysteine.</text>
</comment>
<comment type="catalytic activity">
    <reaction evidence="1">
        <text>O-acetyl-L-serine(in) = O-acetyl-L-serine(out)</text>
        <dbReference type="Rhea" id="RHEA:29659"/>
        <dbReference type="ChEBI" id="CHEBI:58340"/>
    </reaction>
    <physiologicalReaction direction="left-to-right" evidence="1">
        <dbReference type="Rhea" id="RHEA:29660"/>
    </physiologicalReaction>
</comment>
<comment type="catalytic activity">
    <reaction evidence="1">
        <text>L-cysteine(in) = L-cysteine(out)</text>
        <dbReference type="Rhea" id="RHEA:29655"/>
        <dbReference type="ChEBI" id="CHEBI:35235"/>
    </reaction>
    <physiologicalReaction direction="left-to-right" evidence="1">
        <dbReference type="Rhea" id="RHEA:29656"/>
    </physiologicalReaction>
</comment>
<comment type="subcellular location">
    <subcellularLocation>
        <location evidence="1">Cell inner membrane</location>
        <topology evidence="2">Multi-pass membrane protein</topology>
    </subcellularLocation>
</comment>
<comment type="similarity">
    <text evidence="3">Belongs to the Rht family.</text>
</comment>
<protein>
    <recommendedName>
        <fullName evidence="1">Cysteine/O-acetylserine efflux protein</fullName>
    </recommendedName>
</protein>
<sequence>MTPTLLSAFWTYTLITAMTPRPNNILALSSATSHGFRQSTRVLAGMSLGFLIVMLLCAGISFSLAVIDPAAVHLLSWAGAAYIVWLAWKIATSPTKEDGLQAKPISFWASFALQFVNVKIILYGVTALSTFVLPQTQALSWVVGVSVLLAMIGTFGNVCWALAGHLFQRLFRQYGRQLNIVLALLLVYCAVRIFY</sequence>
<feature type="chain" id="PRO_0000318732" description="Cysteine/O-acetylserine efflux protein">
    <location>
        <begin position="1"/>
        <end position="195"/>
    </location>
</feature>
<feature type="transmembrane region" description="Helical" evidence="2">
    <location>
        <begin position="47"/>
        <end position="67"/>
    </location>
</feature>
<feature type="transmembrane region" description="Helical" evidence="2">
    <location>
        <begin position="70"/>
        <end position="90"/>
    </location>
</feature>
<feature type="transmembrane region" description="Helical" evidence="2">
    <location>
        <begin position="105"/>
        <end position="125"/>
    </location>
</feature>
<feature type="transmembrane region" description="Helical" evidence="2">
    <location>
        <begin position="142"/>
        <end position="162"/>
    </location>
</feature>
<feature type="transmembrane region" description="Helical" evidence="2">
    <location>
        <begin position="177"/>
        <end position="194"/>
    </location>
</feature>
<name>EAMB_SHIBS</name>
<keyword id="KW-0029">Amino-acid transport</keyword>
<keyword id="KW-0997">Cell inner membrane</keyword>
<keyword id="KW-1003">Cell membrane</keyword>
<keyword id="KW-0472">Membrane</keyword>
<keyword id="KW-0812">Transmembrane</keyword>
<keyword id="KW-1133">Transmembrane helix</keyword>
<keyword id="KW-0813">Transport</keyword>
<reference key="1">
    <citation type="journal article" date="2005" name="Nucleic Acids Res.">
        <title>Genome dynamics and diversity of Shigella species, the etiologic agents of bacillary dysentery.</title>
        <authorList>
            <person name="Yang F."/>
            <person name="Yang J."/>
            <person name="Zhang X."/>
            <person name="Chen L."/>
            <person name="Jiang Y."/>
            <person name="Yan Y."/>
            <person name="Tang X."/>
            <person name="Wang J."/>
            <person name="Xiong Z."/>
            <person name="Dong J."/>
            <person name="Xue Y."/>
            <person name="Zhu Y."/>
            <person name="Xu X."/>
            <person name="Sun L."/>
            <person name="Chen S."/>
            <person name="Nie H."/>
            <person name="Peng J."/>
            <person name="Xu J."/>
            <person name="Wang Y."/>
            <person name="Yuan Z."/>
            <person name="Wen Y."/>
            <person name="Yao Z."/>
            <person name="Shen Y."/>
            <person name="Qiang B."/>
            <person name="Hou Y."/>
            <person name="Yu J."/>
            <person name="Jin Q."/>
        </authorList>
    </citation>
    <scope>NUCLEOTIDE SEQUENCE [LARGE SCALE GENOMIC DNA]</scope>
    <source>
        <strain>Sb227</strain>
    </source>
</reference>
<organism>
    <name type="scientific">Shigella boydii serotype 4 (strain Sb227)</name>
    <dbReference type="NCBI Taxonomy" id="300268"/>
    <lineage>
        <taxon>Bacteria</taxon>
        <taxon>Pseudomonadati</taxon>
        <taxon>Pseudomonadota</taxon>
        <taxon>Gammaproteobacteria</taxon>
        <taxon>Enterobacterales</taxon>
        <taxon>Enterobacteriaceae</taxon>
        <taxon>Shigella</taxon>
    </lineage>
</organism>